<comment type="function">
    <text evidence="1">Cell wall formation. Adds enolpyruvyl to UDP-N-acetylglucosamine.</text>
</comment>
<comment type="catalytic activity">
    <reaction evidence="1">
        <text>phosphoenolpyruvate + UDP-N-acetyl-alpha-D-glucosamine = UDP-N-acetyl-3-O-(1-carboxyvinyl)-alpha-D-glucosamine + phosphate</text>
        <dbReference type="Rhea" id="RHEA:18681"/>
        <dbReference type="ChEBI" id="CHEBI:43474"/>
        <dbReference type="ChEBI" id="CHEBI:57705"/>
        <dbReference type="ChEBI" id="CHEBI:58702"/>
        <dbReference type="ChEBI" id="CHEBI:68483"/>
        <dbReference type="EC" id="2.5.1.7"/>
    </reaction>
</comment>
<comment type="pathway">
    <text evidence="1">Cell wall biogenesis; peptidoglycan biosynthesis.</text>
</comment>
<comment type="subcellular location">
    <subcellularLocation>
        <location evidence="1">Cytoplasm</location>
    </subcellularLocation>
</comment>
<comment type="similarity">
    <text evidence="1">Belongs to the EPSP synthase family. MurA subfamily.</text>
</comment>
<name>MURA_HELPS</name>
<protein>
    <recommendedName>
        <fullName evidence="1">UDP-N-acetylglucosamine 1-carboxyvinyltransferase</fullName>
        <ecNumber evidence="1">2.5.1.7</ecNumber>
    </recommendedName>
    <alternativeName>
        <fullName evidence="1">Enoylpyruvate transferase</fullName>
    </alternativeName>
    <alternativeName>
        <fullName evidence="1">UDP-N-acetylglucosamine enolpyruvyl transferase</fullName>
        <shortName evidence="1">EPT</shortName>
    </alternativeName>
</protein>
<proteinExistence type="inferred from homology"/>
<accession>B2UTH9</accession>
<feature type="chain" id="PRO_1000094696" description="UDP-N-acetylglucosamine 1-carboxyvinyltransferase">
    <location>
        <begin position="1"/>
        <end position="422"/>
    </location>
</feature>
<feature type="active site" description="Proton donor" evidence="1">
    <location>
        <position position="117"/>
    </location>
</feature>
<feature type="binding site" evidence="1">
    <location>
        <begin position="22"/>
        <end position="23"/>
    </location>
    <ligand>
        <name>phosphoenolpyruvate</name>
        <dbReference type="ChEBI" id="CHEBI:58702"/>
    </ligand>
</feature>
<feature type="binding site" evidence="1">
    <location>
        <position position="93"/>
    </location>
    <ligand>
        <name>UDP-N-acetyl-alpha-D-glucosamine</name>
        <dbReference type="ChEBI" id="CHEBI:57705"/>
    </ligand>
</feature>
<feature type="binding site" evidence="1">
    <location>
        <begin position="122"/>
        <end position="126"/>
    </location>
    <ligand>
        <name>UDP-N-acetyl-alpha-D-glucosamine</name>
        <dbReference type="ChEBI" id="CHEBI:57705"/>
    </ligand>
</feature>
<feature type="binding site" evidence="1">
    <location>
        <position position="308"/>
    </location>
    <ligand>
        <name>UDP-N-acetyl-alpha-D-glucosamine</name>
        <dbReference type="ChEBI" id="CHEBI:57705"/>
    </ligand>
</feature>
<feature type="binding site" evidence="1">
    <location>
        <position position="330"/>
    </location>
    <ligand>
        <name>UDP-N-acetyl-alpha-D-glucosamine</name>
        <dbReference type="ChEBI" id="CHEBI:57705"/>
    </ligand>
</feature>
<feature type="modified residue" description="2-(S-cysteinyl)pyruvic acid O-phosphothioketal" evidence="1">
    <location>
        <position position="117"/>
    </location>
</feature>
<keyword id="KW-0131">Cell cycle</keyword>
<keyword id="KW-0132">Cell division</keyword>
<keyword id="KW-0133">Cell shape</keyword>
<keyword id="KW-0961">Cell wall biogenesis/degradation</keyword>
<keyword id="KW-0963">Cytoplasm</keyword>
<keyword id="KW-0573">Peptidoglycan synthesis</keyword>
<keyword id="KW-0670">Pyruvate</keyword>
<keyword id="KW-0808">Transferase</keyword>
<reference key="1">
    <citation type="submission" date="2008-05" db="EMBL/GenBank/DDBJ databases">
        <title>Genome sequence of Helicobacter pylori from the remote Amazon: traces of Asian ancestry of the first Americans.</title>
        <authorList>
            <person name="Kersulyte D."/>
            <person name="Kalia A."/>
            <person name="Gilman R.H."/>
            <person name="Berg D.E."/>
        </authorList>
    </citation>
    <scope>NUCLEOTIDE SEQUENCE [LARGE SCALE GENOMIC DNA]</scope>
    <source>
        <strain>Shi470</strain>
    </source>
</reference>
<sequence>MDFLEIVGQVPLKGGVEISGAKNSALPILAATLLSQQEVKIKSLPQVVDIKAMALLLQNLGASLEWLDPNTLQISAKSLHHTEATYDLVRKMRASILVLGPLLARFKECLVSLPGGCAIGARPVDLHLKAMQQLGAEIKIEQGYIHAKAPKGLKGNDILFDKISVTGTENALMAASLAKGITRIINAAKEPEITQLCAFLQSGGVEIEGVGSSELKIRGVENDALNLKDIQIIPDRIEAGTYLCVGAITNSQLKINRIIPNHLQAITDKLIEIGFSLDIQENSIEIYPAQKRQAFEITTKEYPGFPTDMQAQFMALATQCLGTSVIEETLFENRFMHASELQRLGANISLKTNIATISGSTELTGSDVMATDLRASSALILAALVAKGVSRVHRIYHLDRGYERLEDKINALGAKVARLKEK</sequence>
<evidence type="ECO:0000255" key="1">
    <source>
        <dbReference type="HAMAP-Rule" id="MF_00111"/>
    </source>
</evidence>
<dbReference type="EC" id="2.5.1.7" evidence="1"/>
<dbReference type="EMBL" id="CP001072">
    <property type="protein sequence ID" value="ACD48161.1"/>
    <property type="molecule type" value="Genomic_DNA"/>
</dbReference>
<dbReference type="RefSeq" id="WP_000346514.1">
    <property type="nucleotide sequence ID" value="NC_010698.2"/>
</dbReference>
<dbReference type="SMR" id="B2UTH9"/>
<dbReference type="KEGG" id="hps:HPSH_03620"/>
<dbReference type="HOGENOM" id="CLU_027387_0_0_7"/>
<dbReference type="UniPathway" id="UPA00219"/>
<dbReference type="GO" id="GO:0005737">
    <property type="term" value="C:cytoplasm"/>
    <property type="evidence" value="ECO:0007669"/>
    <property type="project" value="UniProtKB-SubCell"/>
</dbReference>
<dbReference type="GO" id="GO:0008760">
    <property type="term" value="F:UDP-N-acetylglucosamine 1-carboxyvinyltransferase activity"/>
    <property type="evidence" value="ECO:0007669"/>
    <property type="project" value="UniProtKB-UniRule"/>
</dbReference>
<dbReference type="GO" id="GO:0051301">
    <property type="term" value="P:cell division"/>
    <property type="evidence" value="ECO:0007669"/>
    <property type="project" value="UniProtKB-KW"/>
</dbReference>
<dbReference type="GO" id="GO:0071555">
    <property type="term" value="P:cell wall organization"/>
    <property type="evidence" value="ECO:0007669"/>
    <property type="project" value="UniProtKB-KW"/>
</dbReference>
<dbReference type="GO" id="GO:0009252">
    <property type="term" value="P:peptidoglycan biosynthetic process"/>
    <property type="evidence" value="ECO:0007669"/>
    <property type="project" value="UniProtKB-UniRule"/>
</dbReference>
<dbReference type="GO" id="GO:0008360">
    <property type="term" value="P:regulation of cell shape"/>
    <property type="evidence" value="ECO:0007669"/>
    <property type="project" value="UniProtKB-KW"/>
</dbReference>
<dbReference type="GO" id="GO:0019277">
    <property type="term" value="P:UDP-N-acetylgalactosamine biosynthetic process"/>
    <property type="evidence" value="ECO:0007669"/>
    <property type="project" value="InterPro"/>
</dbReference>
<dbReference type="CDD" id="cd01555">
    <property type="entry name" value="UdpNAET"/>
    <property type="match status" value="1"/>
</dbReference>
<dbReference type="FunFam" id="3.65.10.10:FF:000001">
    <property type="entry name" value="UDP-N-acetylglucosamine 1-carboxyvinyltransferase"/>
    <property type="match status" value="1"/>
</dbReference>
<dbReference type="Gene3D" id="3.65.10.10">
    <property type="entry name" value="Enolpyruvate transferase domain"/>
    <property type="match status" value="2"/>
</dbReference>
<dbReference type="HAMAP" id="MF_00111">
    <property type="entry name" value="MurA"/>
    <property type="match status" value="1"/>
</dbReference>
<dbReference type="InterPro" id="IPR001986">
    <property type="entry name" value="Enolpyruvate_Tfrase_dom"/>
</dbReference>
<dbReference type="InterPro" id="IPR036968">
    <property type="entry name" value="Enolpyruvate_Tfrase_sf"/>
</dbReference>
<dbReference type="InterPro" id="IPR050068">
    <property type="entry name" value="MurA_subfamily"/>
</dbReference>
<dbReference type="InterPro" id="IPR013792">
    <property type="entry name" value="RNA3'P_cycl/enolpyr_Trfase_a/b"/>
</dbReference>
<dbReference type="InterPro" id="IPR005750">
    <property type="entry name" value="UDP_GlcNAc_COvinyl_MurA"/>
</dbReference>
<dbReference type="NCBIfam" id="TIGR01072">
    <property type="entry name" value="murA"/>
    <property type="match status" value="1"/>
</dbReference>
<dbReference type="NCBIfam" id="NF006873">
    <property type="entry name" value="PRK09369.1"/>
    <property type="match status" value="1"/>
</dbReference>
<dbReference type="PANTHER" id="PTHR43783">
    <property type="entry name" value="UDP-N-ACETYLGLUCOSAMINE 1-CARBOXYVINYLTRANSFERASE"/>
    <property type="match status" value="1"/>
</dbReference>
<dbReference type="PANTHER" id="PTHR43783:SF1">
    <property type="entry name" value="UDP-N-ACETYLGLUCOSAMINE 1-CARBOXYVINYLTRANSFERASE"/>
    <property type="match status" value="1"/>
</dbReference>
<dbReference type="Pfam" id="PF00275">
    <property type="entry name" value="EPSP_synthase"/>
    <property type="match status" value="1"/>
</dbReference>
<dbReference type="SUPFAM" id="SSF55205">
    <property type="entry name" value="EPT/RTPC-like"/>
    <property type="match status" value="1"/>
</dbReference>
<organism>
    <name type="scientific">Helicobacter pylori (strain Shi470)</name>
    <dbReference type="NCBI Taxonomy" id="512562"/>
    <lineage>
        <taxon>Bacteria</taxon>
        <taxon>Pseudomonadati</taxon>
        <taxon>Campylobacterota</taxon>
        <taxon>Epsilonproteobacteria</taxon>
        <taxon>Campylobacterales</taxon>
        <taxon>Helicobacteraceae</taxon>
        <taxon>Helicobacter</taxon>
    </lineage>
</organism>
<gene>
    <name evidence="1" type="primary">murA</name>
    <name type="ordered locus">HPSH_03620</name>
</gene>